<organism>
    <name type="scientific">Thermococcus onnurineus (strain NA1)</name>
    <dbReference type="NCBI Taxonomy" id="523850"/>
    <lineage>
        <taxon>Archaea</taxon>
        <taxon>Methanobacteriati</taxon>
        <taxon>Methanobacteriota</taxon>
        <taxon>Thermococci</taxon>
        <taxon>Thermococcales</taxon>
        <taxon>Thermococcaceae</taxon>
        <taxon>Thermococcus</taxon>
    </lineage>
</organism>
<comment type="function">
    <text evidence="2 3">Removes the N-terminal methionine from nascent proteins. The N-terminal methionine is often cleaved when the second residue in the primary sequence is small and uncharged (Met-Ala-, Cys, Gly, Pro, Ser, Thr, or Val).</text>
</comment>
<comment type="catalytic activity">
    <reaction evidence="2 3">
        <text>Release of N-terminal amino acids, preferentially methionine, from peptides and arylamides.</text>
        <dbReference type="EC" id="3.4.11.18"/>
    </reaction>
</comment>
<comment type="cofactor">
    <cofactor evidence="1 3">
        <name>Fe(2+)</name>
        <dbReference type="ChEBI" id="CHEBI:29033"/>
    </cofactor>
    <cofactor evidence="1 3">
        <name>Co(2+)</name>
        <dbReference type="ChEBI" id="CHEBI:48828"/>
    </cofactor>
    <cofactor evidence="1 3">
        <name>Ni(2+)</name>
        <dbReference type="ChEBI" id="CHEBI:49786"/>
    </cofactor>
    <cofactor evidence="1 3">
        <name>Mn(2+)</name>
        <dbReference type="ChEBI" id="CHEBI:29035"/>
    </cofactor>
    <text evidence="1 3">Binds 2 divalent metal cations per subunit. Has a high-affinity and a low affinity metal-binding site. The true nature of the physiological cofactor is under debate. Most likely, methionine aminopeptidases function as mononuclear Fe(2+)-metalloproteases under physiological conditions, and the catalytically relevant metal-binding site has been assigned to the histidine-containing high-affinity site. The enzyme is active with cobalt, nickel, manganese and divalent iron ions.</text>
</comment>
<comment type="biophysicochemical properties">
    <kinetics>
        <KM evidence="3">0.68 mM for L-Met-p-nitroanilide</KM>
        <text>kcat is 168 min(-1) with L-Met-p-nitroanilide as substrate.</text>
    </kinetics>
    <phDependence>
        <text evidence="3">Optimum pH is 7.</text>
    </phDependence>
    <temperatureDependence>
        <text evidence="3">Optimum temperature is 80-90 degrees Celsius.</text>
    </temperatureDependence>
</comment>
<comment type="subunit">
    <text evidence="2">Monomer.</text>
</comment>
<comment type="similarity">
    <text evidence="2">Belongs to the peptidase M24A family. Methionine aminopeptidase archaeal type 2 subfamily.</text>
</comment>
<proteinExistence type="evidence at protein level"/>
<protein>
    <recommendedName>
        <fullName evidence="2">Methionine aminopeptidase</fullName>
        <shortName evidence="2">MAP</shortName>
        <shortName evidence="2">MetAP</shortName>
        <ecNumber evidence="2">3.4.11.18</ecNumber>
    </recommendedName>
    <alternativeName>
        <fullName evidence="2">Peptidase M</fullName>
    </alternativeName>
</protein>
<feature type="chain" id="PRO_0000428826" description="Methionine aminopeptidase">
    <location>
        <begin position="1"/>
        <end position="295"/>
    </location>
</feature>
<feature type="binding site" evidence="2">
    <location>
        <position position="63"/>
    </location>
    <ligand>
        <name>substrate</name>
    </ligand>
</feature>
<feature type="binding site" evidence="2">
    <location>
        <position position="83"/>
    </location>
    <ligand>
        <name>a divalent metal cation</name>
        <dbReference type="ChEBI" id="CHEBI:60240"/>
        <label>1</label>
    </ligand>
</feature>
<feature type="binding site" evidence="2">
    <location>
        <position position="94"/>
    </location>
    <ligand>
        <name>a divalent metal cation</name>
        <dbReference type="ChEBI" id="CHEBI:60240"/>
        <label>1</label>
    </ligand>
</feature>
<feature type="binding site" evidence="2">
    <location>
        <position position="94"/>
    </location>
    <ligand>
        <name>a divalent metal cation</name>
        <dbReference type="ChEBI" id="CHEBI:60240"/>
        <label>2</label>
        <note>catalytic</note>
    </ligand>
</feature>
<feature type="binding site" evidence="2">
    <location>
        <position position="154"/>
    </location>
    <ligand>
        <name>a divalent metal cation</name>
        <dbReference type="ChEBI" id="CHEBI:60240"/>
        <label>2</label>
        <note>catalytic</note>
    </ligand>
</feature>
<feature type="binding site" evidence="2">
    <location>
        <position position="162"/>
    </location>
    <ligand>
        <name>substrate</name>
    </ligand>
</feature>
<feature type="binding site" evidence="2">
    <location>
        <position position="188"/>
    </location>
    <ligand>
        <name>a divalent metal cation</name>
        <dbReference type="ChEBI" id="CHEBI:60240"/>
        <label>2</label>
        <note>catalytic</note>
    </ligand>
</feature>
<feature type="binding site" evidence="2">
    <location>
        <position position="281"/>
    </location>
    <ligand>
        <name>a divalent metal cation</name>
        <dbReference type="ChEBI" id="CHEBI:60240"/>
        <label>1</label>
    </ligand>
</feature>
<feature type="binding site" evidence="2">
    <location>
        <position position="281"/>
    </location>
    <ligand>
        <name>a divalent metal cation</name>
        <dbReference type="ChEBI" id="CHEBI:60240"/>
        <label>2</label>
        <note>catalytic</note>
    </ligand>
</feature>
<name>MAP2_THEON</name>
<reference key="1">
    <citation type="journal article" date="2006" name="Mar. Biotechnol.">
        <title>Cloning, expression, and characterization of a methionyl aminopeptidase from a hyperthermophilic archaeon Thermococcus sp. NA1.</title>
        <authorList>
            <person name="Lee H.S."/>
            <person name="Kim Y.J."/>
            <person name="Bae S.S."/>
            <person name="Jeon J.H."/>
            <person name="Lim J.K."/>
            <person name="Jeong B.C."/>
            <person name="Kang S.G."/>
            <person name="Lee J.H."/>
        </authorList>
    </citation>
    <scope>NUCLEOTIDE SEQUENCE [GENOMIC DNA]</scope>
    <scope>FUNCTION</scope>
    <scope>CATALYTIC ACTIVITY</scope>
    <scope>BIOPHYSICOCHEMICAL PROPERTIES</scope>
    <scope>COFACTOR</scope>
    <source>
        <strain>NA1</strain>
    </source>
</reference>
<reference key="2">
    <citation type="journal article" date="2008" name="J. Bacteriol.">
        <title>The complete genome sequence of Thermococcus onnurineus NA1 reveals a mixed heterotrophic and carboxydotrophic metabolism.</title>
        <authorList>
            <person name="Lee H.S."/>
            <person name="Kang S.G."/>
            <person name="Bae S.S."/>
            <person name="Lim J.K."/>
            <person name="Cho Y."/>
            <person name="Kim Y.J."/>
            <person name="Jeon J.H."/>
            <person name="Cha S.-S."/>
            <person name="Kwon K.K."/>
            <person name="Kim H.-T."/>
            <person name="Park C.-J."/>
            <person name="Lee H.-W."/>
            <person name="Kim S.I."/>
            <person name="Chun J."/>
            <person name="Colwell R.R."/>
            <person name="Kim S.-J."/>
            <person name="Lee J.-H."/>
        </authorList>
    </citation>
    <scope>NUCLEOTIDE SEQUENCE [LARGE SCALE GENOMIC DNA]</scope>
    <source>
        <strain>NA1</strain>
    </source>
</reference>
<sequence length="295" mass="33013">MDEREALIKAGEIARQVKKEVISLIKPGTKLYDIAEFVERRIIELGGKPAFPCNLSINEIAAHYTPYKGDETVLKEGDYLKVDIGVHVDGYIADTALTFRVGMEEDDLVTAAREALENAIKVIRAGIKINEIGKAIEETIRGYGFNPIVNLSGHKIERYKLHAGISIPNIYRPADSYVLKEGDVIAIEPFATTGAGQVIEVPPALIFMYLRDRPVRMAQARRVLMHIKREYNGLPFAYRWLQGFMPEGQLKLALAQLDRVGAIYSYPILREVRGGLVAQFEHTVIVEKEGAYITT</sequence>
<dbReference type="EC" id="3.4.11.18" evidence="2"/>
<dbReference type="EMBL" id="DQ144133">
    <property type="protein sequence ID" value="ABA26945.1"/>
    <property type="molecule type" value="Genomic_DNA"/>
</dbReference>
<dbReference type="EMBL" id="CP000855">
    <property type="protein sequence ID" value="ACJ15847.1"/>
    <property type="molecule type" value="Genomic_DNA"/>
</dbReference>
<dbReference type="RefSeq" id="WP_012571319.1">
    <property type="nucleotide sequence ID" value="NC_011529.1"/>
</dbReference>
<dbReference type="SMR" id="B6YTG0"/>
<dbReference type="STRING" id="523850.TON_0362"/>
<dbReference type="MEROPS" id="M24.035"/>
<dbReference type="GeneID" id="7018028"/>
<dbReference type="KEGG" id="ton:TON_0362"/>
<dbReference type="PATRIC" id="fig|523850.10.peg.365"/>
<dbReference type="eggNOG" id="arCOG01001">
    <property type="taxonomic scope" value="Archaea"/>
</dbReference>
<dbReference type="HOGENOM" id="CLU_015857_7_0_2"/>
<dbReference type="OrthoDB" id="372008at2157"/>
<dbReference type="Proteomes" id="UP000002727">
    <property type="component" value="Chromosome"/>
</dbReference>
<dbReference type="GO" id="GO:0005737">
    <property type="term" value="C:cytoplasm"/>
    <property type="evidence" value="ECO:0007669"/>
    <property type="project" value="TreeGrafter"/>
</dbReference>
<dbReference type="GO" id="GO:0004239">
    <property type="term" value="F:initiator methionyl aminopeptidase activity"/>
    <property type="evidence" value="ECO:0007669"/>
    <property type="project" value="UniProtKB-UniRule"/>
</dbReference>
<dbReference type="GO" id="GO:0046872">
    <property type="term" value="F:metal ion binding"/>
    <property type="evidence" value="ECO:0007669"/>
    <property type="project" value="UniProtKB-UniRule"/>
</dbReference>
<dbReference type="GO" id="GO:0070006">
    <property type="term" value="F:metalloaminopeptidase activity"/>
    <property type="evidence" value="ECO:0007669"/>
    <property type="project" value="UniProtKB-UniRule"/>
</dbReference>
<dbReference type="GO" id="GO:0006508">
    <property type="term" value="P:proteolysis"/>
    <property type="evidence" value="ECO:0007669"/>
    <property type="project" value="UniProtKB-KW"/>
</dbReference>
<dbReference type="CDD" id="cd01088">
    <property type="entry name" value="MetAP2"/>
    <property type="match status" value="1"/>
</dbReference>
<dbReference type="Gene3D" id="3.90.230.10">
    <property type="entry name" value="Creatinase/methionine aminopeptidase superfamily"/>
    <property type="match status" value="1"/>
</dbReference>
<dbReference type="Gene3D" id="1.10.10.10">
    <property type="entry name" value="Winged helix-like DNA-binding domain superfamily/Winged helix DNA-binding domain"/>
    <property type="match status" value="1"/>
</dbReference>
<dbReference type="HAMAP" id="MF_01975">
    <property type="entry name" value="MetAP_2_arc"/>
    <property type="match status" value="1"/>
</dbReference>
<dbReference type="InterPro" id="IPR036005">
    <property type="entry name" value="Creatinase/aminopeptidase-like"/>
</dbReference>
<dbReference type="InterPro" id="IPR050247">
    <property type="entry name" value="Met_Aminopeptidase_Type2"/>
</dbReference>
<dbReference type="InterPro" id="IPR028595">
    <property type="entry name" value="MetAP_archaeal"/>
</dbReference>
<dbReference type="InterPro" id="IPR000994">
    <property type="entry name" value="Pept_M24"/>
</dbReference>
<dbReference type="InterPro" id="IPR001714">
    <property type="entry name" value="Pept_M24_MAP"/>
</dbReference>
<dbReference type="InterPro" id="IPR002468">
    <property type="entry name" value="Pept_M24A_MAP2"/>
</dbReference>
<dbReference type="InterPro" id="IPR018349">
    <property type="entry name" value="Pept_M24A_MAP2_BS"/>
</dbReference>
<dbReference type="InterPro" id="IPR036388">
    <property type="entry name" value="WH-like_DNA-bd_sf"/>
</dbReference>
<dbReference type="InterPro" id="IPR036390">
    <property type="entry name" value="WH_DNA-bd_sf"/>
</dbReference>
<dbReference type="NCBIfam" id="TIGR00501">
    <property type="entry name" value="met_pdase_II"/>
    <property type="match status" value="1"/>
</dbReference>
<dbReference type="PANTHER" id="PTHR45777">
    <property type="entry name" value="METHIONINE AMINOPEPTIDASE 2"/>
    <property type="match status" value="1"/>
</dbReference>
<dbReference type="PANTHER" id="PTHR45777:SF2">
    <property type="entry name" value="METHIONINE AMINOPEPTIDASE 2"/>
    <property type="match status" value="1"/>
</dbReference>
<dbReference type="Pfam" id="PF00557">
    <property type="entry name" value="Peptidase_M24"/>
    <property type="match status" value="1"/>
</dbReference>
<dbReference type="PRINTS" id="PR00599">
    <property type="entry name" value="MAPEPTIDASE"/>
</dbReference>
<dbReference type="SUPFAM" id="SSF55920">
    <property type="entry name" value="Creatinase/aminopeptidase"/>
    <property type="match status" value="1"/>
</dbReference>
<dbReference type="SUPFAM" id="SSF46785">
    <property type="entry name" value="Winged helix' DNA-binding domain"/>
    <property type="match status" value="1"/>
</dbReference>
<dbReference type="PROSITE" id="PS01202">
    <property type="entry name" value="MAP_2"/>
    <property type="match status" value="1"/>
</dbReference>
<keyword id="KW-0031">Aminopeptidase</keyword>
<keyword id="KW-0378">Hydrolase</keyword>
<keyword id="KW-0479">Metal-binding</keyword>
<keyword id="KW-0645">Protease</keyword>
<evidence type="ECO:0000250" key="1"/>
<evidence type="ECO:0000255" key="2">
    <source>
        <dbReference type="HAMAP-Rule" id="MF_01975"/>
    </source>
</evidence>
<evidence type="ECO:0000269" key="3">
    <source>
    </source>
</evidence>
<gene>
    <name evidence="2" type="primary">map</name>
    <name type="ordered locus">TON_0362</name>
</gene>
<accession>B6YTG0</accession>
<accession>Q2QC91</accession>